<feature type="chain" id="PRO_0000225718" description="Large ribosomal subunit protein bL32">
    <location>
        <begin position="1"/>
        <end position="59"/>
    </location>
</feature>
<feature type="region of interest" description="Disordered" evidence="2">
    <location>
        <begin position="1"/>
        <end position="59"/>
    </location>
</feature>
<feature type="compositionally biased region" description="Basic residues" evidence="2">
    <location>
        <begin position="49"/>
        <end position="59"/>
    </location>
</feature>
<evidence type="ECO:0000255" key="1">
    <source>
        <dbReference type="HAMAP-Rule" id="MF_00340"/>
    </source>
</evidence>
<evidence type="ECO:0000256" key="2">
    <source>
        <dbReference type="SAM" id="MobiDB-lite"/>
    </source>
</evidence>
<evidence type="ECO:0000305" key="3"/>
<keyword id="KW-0687">Ribonucleoprotein</keyword>
<keyword id="KW-0689">Ribosomal protein</keyword>
<comment type="similarity">
    <text evidence="1">Belongs to the bacterial ribosomal protein bL32 family.</text>
</comment>
<sequence length="59" mass="6508">MAVQQNKKSPSKRGMHRAHDFLTTPPLAVESTTGEAHLRHHISPAGFYRGKKVTKGKGE</sequence>
<proteinExistence type="inferred from homology"/>
<reference key="1">
    <citation type="journal article" date="2009" name="BMC Genomics">
        <title>Metabolic analysis of the soil microbe Dechloromonas aromatica str. RCB: indications of a surprisingly complex life-style and cryptic anaerobic pathways for aromatic degradation.</title>
        <authorList>
            <person name="Salinero K.K."/>
            <person name="Keller K."/>
            <person name="Feil W.S."/>
            <person name="Feil H."/>
            <person name="Trong S."/>
            <person name="Di Bartolo G."/>
            <person name="Lapidus A."/>
        </authorList>
    </citation>
    <scope>NUCLEOTIDE SEQUENCE [LARGE SCALE GENOMIC DNA]</scope>
    <source>
        <strain>RCB</strain>
    </source>
</reference>
<protein>
    <recommendedName>
        <fullName evidence="1">Large ribosomal subunit protein bL32</fullName>
    </recommendedName>
    <alternativeName>
        <fullName evidence="3">50S ribosomal protein L32</fullName>
    </alternativeName>
</protein>
<accession>Q47EH3</accession>
<name>RL32_DECAR</name>
<gene>
    <name evidence="1" type="primary">rpmF</name>
    <name type="ordered locus">Daro_2013</name>
</gene>
<dbReference type="EMBL" id="CP000089">
    <property type="protein sequence ID" value="AAZ46758.1"/>
    <property type="molecule type" value="Genomic_DNA"/>
</dbReference>
<dbReference type="SMR" id="Q47EH3"/>
<dbReference type="STRING" id="159087.Daro_2013"/>
<dbReference type="KEGG" id="dar:Daro_2013"/>
<dbReference type="eggNOG" id="COG0333">
    <property type="taxonomic scope" value="Bacteria"/>
</dbReference>
<dbReference type="HOGENOM" id="CLU_129084_2_1_4"/>
<dbReference type="OrthoDB" id="9801927at2"/>
<dbReference type="GO" id="GO:0015934">
    <property type="term" value="C:large ribosomal subunit"/>
    <property type="evidence" value="ECO:0007669"/>
    <property type="project" value="InterPro"/>
</dbReference>
<dbReference type="GO" id="GO:0003735">
    <property type="term" value="F:structural constituent of ribosome"/>
    <property type="evidence" value="ECO:0007669"/>
    <property type="project" value="InterPro"/>
</dbReference>
<dbReference type="GO" id="GO:0006412">
    <property type="term" value="P:translation"/>
    <property type="evidence" value="ECO:0007669"/>
    <property type="project" value="UniProtKB-UniRule"/>
</dbReference>
<dbReference type="HAMAP" id="MF_00340">
    <property type="entry name" value="Ribosomal_bL32"/>
    <property type="match status" value="1"/>
</dbReference>
<dbReference type="InterPro" id="IPR002677">
    <property type="entry name" value="Ribosomal_bL32"/>
</dbReference>
<dbReference type="InterPro" id="IPR044957">
    <property type="entry name" value="Ribosomal_bL32_bact"/>
</dbReference>
<dbReference type="InterPro" id="IPR011332">
    <property type="entry name" value="Ribosomal_zn-bd"/>
</dbReference>
<dbReference type="NCBIfam" id="TIGR01031">
    <property type="entry name" value="rpmF_bact"/>
    <property type="match status" value="1"/>
</dbReference>
<dbReference type="PANTHER" id="PTHR35534">
    <property type="entry name" value="50S RIBOSOMAL PROTEIN L32"/>
    <property type="match status" value="1"/>
</dbReference>
<dbReference type="PANTHER" id="PTHR35534:SF1">
    <property type="entry name" value="LARGE RIBOSOMAL SUBUNIT PROTEIN BL32"/>
    <property type="match status" value="1"/>
</dbReference>
<dbReference type="Pfam" id="PF01783">
    <property type="entry name" value="Ribosomal_L32p"/>
    <property type="match status" value="1"/>
</dbReference>
<dbReference type="SUPFAM" id="SSF57829">
    <property type="entry name" value="Zn-binding ribosomal proteins"/>
    <property type="match status" value="1"/>
</dbReference>
<organism>
    <name type="scientific">Dechloromonas aromatica (strain RCB)</name>
    <dbReference type="NCBI Taxonomy" id="159087"/>
    <lineage>
        <taxon>Bacteria</taxon>
        <taxon>Pseudomonadati</taxon>
        <taxon>Pseudomonadota</taxon>
        <taxon>Betaproteobacteria</taxon>
        <taxon>Rhodocyclales</taxon>
        <taxon>Azonexaceae</taxon>
        <taxon>Dechloromonas</taxon>
    </lineage>
</organism>